<keyword id="KW-0235">DNA replication</keyword>
<keyword id="KW-1048">Host nucleus</keyword>
<keyword id="KW-1185">Reference proteome</keyword>
<keyword id="KW-1194">Viral DNA replication</keyword>
<sequence length="484" mass="56228">MSAPLSIEQDDLLTDDLKSWLSDIDFSNDNEEAIEMEPSDIEMSSPPIDIETSPPEEADVNLDDTWATVQKNGNNKLNRFILTFFPSDMDTKWLEPETYFENSPNKFDCWTGQYEYCPDTGKLHAHIYIECNHKHRIRFNVFHREIRKYHQSVQLQLAKRASKKQRQSAINYVTADFKRAPGSLVFRWEHNKFPSDFDPKCVNKKSKSDKVSKDEQHETQRLWIESKPRHWTWDQIVHENEESKKLLFGCTAGEKYHKGRHAEDARRTINDVIIFYGAGGTGKTTEAQAWGSEDEPVQECRYYRRNPDDGAFWGGGRTCYKGQRIVHYEEFAGQEAFGRLKEVCDIGKHGPAVNVKNGGALLNHDTVIFTSNIHPAGWFHKLWESDPKQWMPFERRITQVRFYPSHRADGSLNQPDENNPPYFIDQTEEFRQFVGDYDKAKEHAELHWPLKEAPEPTAQVFVPGRSHGVTENTFFEYCKTGRAP</sequence>
<proteinExistence type="predicted"/>
<protein>
    <recommendedName>
        <fullName>Replication-associated protein</fullName>
        <shortName>Rep</shortName>
    </recommendedName>
    <alternativeName>
        <fullName>Viral protein 3</fullName>
        <shortName>VP3</shortName>
    </alternativeName>
</protein>
<comment type="function">
    <text evidence="2 3">Plays an essential for the replication of viral DNA. Presumably cleaves viral genomic dsRNA replicative form to initiate rolling circle replication.</text>
</comment>
<comment type="subcellular location">
    <subcellularLocation>
        <location evidence="3">Host nucleus</location>
    </subcellularLocation>
</comment>
<organismHost>
    <name type="scientific">Chaetoceros</name>
    <dbReference type="NCBI Taxonomy" id="49237"/>
</organismHost>
<name>REP_CPBDV</name>
<evidence type="ECO:0000255" key="1">
    <source>
        <dbReference type="PROSITE-ProRule" id="PRU00768"/>
    </source>
</evidence>
<evidence type="ECO:0000303" key="2">
    <source>
    </source>
</evidence>
<evidence type="ECO:0000305" key="3"/>
<reference key="1">
    <citation type="journal article" date="2013" name="PLoS ONE">
        <title>Isolation and Characterization of a Single-Stranded DNA Virus Infecting the Marine Diatom Chaetoceros sp. Strain SS628-11 Isolated from Western Japan.</title>
        <authorList>
            <person name="Kimura K."/>
            <person name="Tomaru Y."/>
        </authorList>
    </citation>
    <scope>NUCLEOTIDE SEQUENCE [LARGE SCALE GENOMIC DNA]</scope>
    <scope>FUNCTION</scope>
    <source>
        <strain>Csp07DNAV</strain>
    </source>
</reference>
<dbReference type="EMBL" id="AB844272">
    <property type="protein sequence ID" value="BAO48208.1"/>
    <property type="molecule type" value="Genomic_DNA"/>
</dbReference>
<dbReference type="RefSeq" id="YP_009001777.1">
    <property type="nucleotide sequence ID" value="NC_023441.1"/>
</dbReference>
<dbReference type="GeneID" id="18266919"/>
<dbReference type="KEGG" id="vg:18266919"/>
<dbReference type="Proteomes" id="UP000052105">
    <property type="component" value="Segment"/>
</dbReference>
<dbReference type="GO" id="GO:0042025">
    <property type="term" value="C:host cell nucleus"/>
    <property type="evidence" value="ECO:0007669"/>
    <property type="project" value="UniProtKB-SubCell"/>
</dbReference>
<dbReference type="GO" id="GO:0006260">
    <property type="term" value="P:DNA replication"/>
    <property type="evidence" value="ECO:0007669"/>
    <property type="project" value="UniProtKB-KW"/>
</dbReference>
<dbReference type="GO" id="GO:0039693">
    <property type="term" value="P:viral DNA genome replication"/>
    <property type="evidence" value="ECO:0007669"/>
    <property type="project" value="UniProtKB-KW"/>
</dbReference>
<dbReference type="Gene3D" id="3.40.1310.20">
    <property type="match status" value="1"/>
</dbReference>
<dbReference type="InterPro" id="IPR027417">
    <property type="entry name" value="P-loop_NTPase"/>
</dbReference>
<dbReference type="SUPFAM" id="SSF52540">
    <property type="entry name" value="P-loop containing nucleoside triphosphate hydrolases"/>
    <property type="match status" value="1"/>
</dbReference>
<organism>
    <name type="scientific">Chaetoceros protobacilladnavirus 2</name>
    <name type="common">Chaetoceros sp. DNA virus 7</name>
    <dbReference type="NCBI Taxonomy" id="3052702"/>
    <lineage>
        <taxon>Viruses</taxon>
        <taxon>Monodnaviria</taxon>
        <taxon>Shotokuvirae</taxon>
        <taxon>Cressdnaviricota</taxon>
        <taxon>Arfiviricetes</taxon>
        <taxon>Baphyvirales</taxon>
        <taxon>Bacilladnaviridae</taxon>
        <taxon>Protobacilladnavirus</taxon>
    </lineage>
</organism>
<feature type="chain" id="PRO_0000445642" description="Replication-associated protein">
    <location>
        <begin position="1"/>
        <end position="484"/>
    </location>
</feature>
<feature type="short sequence motif" description="Nuclear localization signal" evidence="1">
    <location>
        <begin position="146"/>
        <end position="153"/>
    </location>
</feature>
<accession>W6JGV7</accession>